<proteinExistence type="inferred from homology"/>
<dbReference type="EC" id="3.5.4.16" evidence="2"/>
<dbReference type="EMBL" id="CP000758">
    <property type="protein sequence ID" value="ABS14874.1"/>
    <property type="molecule type" value="Genomic_DNA"/>
</dbReference>
<dbReference type="RefSeq" id="WP_006466810.1">
    <property type="nucleotide sequence ID" value="NC_009667.1"/>
</dbReference>
<dbReference type="SMR" id="A6X0X0"/>
<dbReference type="STRING" id="439375.Oant_2158"/>
<dbReference type="GeneID" id="61317383"/>
<dbReference type="KEGG" id="oan:Oant_2158"/>
<dbReference type="eggNOG" id="COG0302">
    <property type="taxonomic scope" value="Bacteria"/>
</dbReference>
<dbReference type="HOGENOM" id="CLU_049768_3_1_5"/>
<dbReference type="PhylomeDB" id="A6X0X0"/>
<dbReference type="UniPathway" id="UPA00848">
    <property type="reaction ID" value="UER00151"/>
</dbReference>
<dbReference type="Proteomes" id="UP000002301">
    <property type="component" value="Chromosome 1"/>
</dbReference>
<dbReference type="GO" id="GO:0005737">
    <property type="term" value="C:cytoplasm"/>
    <property type="evidence" value="ECO:0007669"/>
    <property type="project" value="TreeGrafter"/>
</dbReference>
<dbReference type="GO" id="GO:0005525">
    <property type="term" value="F:GTP binding"/>
    <property type="evidence" value="ECO:0007669"/>
    <property type="project" value="UniProtKB-KW"/>
</dbReference>
<dbReference type="GO" id="GO:0003934">
    <property type="term" value="F:GTP cyclohydrolase I activity"/>
    <property type="evidence" value="ECO:0007669"/>
    <property type="project" value="UniProtKB-UniRule"/>
</dbReference>
<dbReference type="GO" id="GO:0008270">
    <property type="term" value="F:zinc ion binding"/>
    <property type="evidence" value="ECO:0007669"/>
    <property type="project" value="UniProtKB-UniRule"/>
</dbReference>
<dbReference type="GO" id="GO:0006730">
    <property type="term" value="P:one-carbon metabolic process"/>
    <property type="evidence" value="ECO:0007669"/>
    <property type="project" value="UniProtKB-UniRule"/>
</dbReference>
<dbReference type="GO" id="GO:0006729">
    <property type="term" value="P:tetrahydrobiopterin biosynthetic process"/>
    <property type="evidence" value="ECO:0007669"/>
    <property type="project" value="TreeGrafter"/>
</dbReference>
<dbReference type="GO" id="GO:0046654">
    <property type="term" value="P:tetrahydrofolate biosynthetic process"/>
    <property type="evidence" value="ECO:0007669"/>
    <property type="project" value="UniProtKB-UniRule"/>
</dbReference>
<dbReference type="FunFam" id="1.10.286.10:FF:000001">
    <property type="entry name" value="GTP cyclohydrolase 1"/>
    <property type="match status" value="1"/>
</dbReference>
<dbReference type="FunFam" id="3.30.1130.10:FF:000001">
    <property type="entry name" value="GTP cyclohydrolase 1"/>
    <property type="match status" value="1"/>
</dbReference>
<dbReference type="Gene3D" id="1.10.286.10">
    <property type="match status" value="1"/>
</dbReference>
<dbReference type="Gene3D" id="3.30.1130.10">
    <property type="match status" value="1"/>
</dbReference>
<dbReference type="HAMAP" id="MF_00223">
    <property type="entry name" value="FolE"/>
    <property type="match status" value="1"/>
</dbReference>
<dbReference type="InterPro" id="IPR043133">
    <property type="entry name" value="GTP-CH-I_C/QueF"/>
</dbReference>
<dbReference type="InterPro" id="IPR043134">
    <property type="entry name" value="GTP-CH-I_N"/>
</dbReference>
<dbReference type="InterPro" id="IPR001474">
    <property type="entry name" value="GTP_CycHdrlase_I"/>
</dbReference>
<dbReference type="InterPro" id="IPR018234">
    <property type="entry name" value="GTP_CycHdrlase_I_CS"/>
</dbReference>
<dbReference type="InterPro" id="IPR020602">
    <property type="entry name" value="GTP_CycHdrlase_I_dom"/>
</dbReference>
<dbReference type="NCBIfam" id="TIGR00063">
    <property type="entry name" value="folE"/>
    <property type="match status" value="1"/>
</dbReference>
<dbReference type="NCBIfam" id="NF006825">
    <property type="entry name" value="PRK09347.1-2"/>
    <property type="match status" value="1"/>
</dbReference>
<dbReference type="NCBIfam" id="NF006826">
    <property type="entry name" value="PRK09347.1-3"/>
    <property type="match status" value="1"/>
</dbReference>
<dbReference type="PANTHER" id="PTHR11109:SF7">
    <property type="entry name" value="GTP CYCLOHYDROLASE 1"/>
    <property type="match status" value="1"/>
</dbReference>
<dbReference type="PANTHER" id="PTHR11109">
    <property type="entry name" value="GTP CYCLOHYDROLASE I"/>
    <property type="match status" value="1"/>
</dbReference>
<dbReference type="Pfam" id="PF01227">
    <property type="entry name" value="GTP_cyclohydroI"/>
    <property type="match status" value="1"/>
</dbReference>
<dbReference type="SUPFAM" id="SSF55620">
    <property type="entry name" value="Tetrahydrobiopterin biosynthesis enzymes-like"/>
    <property type="match status" value="1"/>
</dbReference>
<dbReference type="PROSITE" id="PS00859">
    <property type="entry name" value="GTP_CYCLOHYDROL_1_1"/>
    <property type="match status" value="1"/>
</dbReference>
<name>GCH1_BRUA4</name>
<keyword id="KW-0342">GTP-binding</keyword>
<keyword id="KW-0378">Hydrolase</keyword>
<keyword id="KW-0479">Metal-binding</keyword>
<keyword id="KW-0547">Nucleotide-binding</keyword>
<keyword id="KW-0554">One-carbon metabolism</keyword>
<keyword id="KW-1185">Reference proteome</keyword>
<keyword id="KW-0862">Zinc</keyword>
<organism>
    <name type="scientific">Brucella anthropi (strain ATCC 49188 / DSM 6882 / CCUG 24695 / JCM 21032 / LMG 3331 / NBRC 15819 / NCTC 12168 / Alc 37)</name>
    <name type="common">Ochrobactrum anthropi</name>
    <dbReference type="NCBI Taxonomy" id="439375"/>
    <lineage>
        <taxon>Bacteria</taxon>
        <taxon>Pseudomonadati</taxon>
        <taxon>Pseudomonadota</taxon>
        <taxon>Alphaproteobacteria</taxon>
        <taxon>Hyphomicrobiales</taxon>
        <taxon>Brucellaceae</taxon>
        <taxon>Brucella/Ochrobactrum group</taxon>
        <taxon>Brucella</taxon>
    </lineage>
</organism>
<sequence length="213" mass="23751">MDARILKEDDESGLPNKQADVTLLHGKPTQADAEAAVRTLLLWAGDDPEREGLLETPKRVAKAYKELFAGYTESPEEVLGTVFEEVGGYNDLVLVKDISFHSHCEHHMVPIIGKAHVAYLPDHKVVGLSKIARVVDIFARRLQTQESITAQIADSIQRILKPRGVAVMIEAEHMCMAMRGIRKQGSTTITTTFTGEMQVNAEEQVRFMTLTRR</sequence>
<feature type="chain" id="PRO_1000043714" description="GTP cyclohydrolase 1">
    <location>
        <begin position="1"/>
        <end position="213"/>
    </location>
</feature>
<feature type="binding site" evidence="2">
    <location>
        <position position="104"/>
    </location>
    <ligand>
        <name>Zn(2+)</name>
        <dbReference type="ChEBI" id="CHEBI:29105"/>
    </ligand>
</feature>
<feature type="binding site" evidence="2">
    <location>
        <position position="107"/>
    </location>
    <ligand>
        <name>Zn(2+)</name>
        <dbReference type="ChEBI" id="CHEBI:29105"/>
    </ligand>
</feature>
<feature type="binding site" evidence="2">
    <location>
        <position position="175"/>
    </location>
    <ligand>
        <name>Zn(2+)</name>
        <dbReference type="ChEBI" id="CHEBI:29105"/>
    </ligand>
</feature>
<accession>A6X0X0</accession>
<protein>
    <recommendedName>
        <fullName evidence="2">GTP cyclohydrolase 1</fullName>
        <ecNumber evidence="2">3.5.4.16</ecNumber>
    </recommendedName>
    <alternativeName>
        <fullName evidence="2">GTP cyclohydrolase I</fullName>
        <shortName evidence="2">GTP-CH-I</shortName>
    </alternativeName>
</protein>
<comment type="catalytic activity">
    <reaction evidence="2">
        <text>GTP + H2O = 7,8-dihydroneopterin 3'-triphosphate + formate + H(+)</text>
        <dbReference type="Rhea" id="RHEA:17473"/>
        <dbReference type="ChEBI" id="CHEBI:15377"/>
        <dbReference type="ChEBI" id="CHEBI:15378"/>
        <dbReference type="ChEBI" id="CHEBI:15740"/>
        <dbReference type="ChEBI" id="CHEBI:37565"/>
        <dbReference type="ChEBI" id="CHEBI:58462"/>
        <dbReference type="EC" id="3.5.4.16"/>
    </reaction>
</comment>
<comment type="pathway">
    <text evidence="2">Cofactor biosynthesis; 7,8-dihydroneopterin triphosphate biosynthesis; 7,8-dihydroneopterin triphosphate from GTP: step 1/1.</text>
</comment>
<comment type="subunit">
    <text evidence="1">Toroid-shaped homodecamer, composed of two pentamers of five dimers.</text>
</comment>
<comment type="similarity">
    <text evidence="2">Belongs to the GTP cyclohydrolase I family.</text>
</comment>
<gene>
    <name evidence="2" type="primary">folE</name>
    <name type="ordered locus">Oant_2158</name>
</gene>
<evidence type="ECO:0000250" key="1"/>
<evidence type="ECO:0000255" key="2">
    <source>
        <dbReference type="HAMAP-Rule" id="MF_00223"/>
    </source>
</evidence>
<reference key="1">
    <citation type="journal article" date="2011" name="J. Bacteriol.">
        <title>Genome of Ochrobactrum anthropi ATCC 49188 T, a versatile opportunistic pathogen and symbiont of several eukaryotic hosts.</title>
        <authorList>
            <person name="Chain P.S."/>
            <person name="Lang D.M."/>
            <person name="Comerci D.J."/>
            <person name="Malfatti S.A."/>
            <person name="Vergez L.M."/>
            <person name="Shin M."/>
            <person name="Ugalde R.A."/>
            <person name="Garcia E."/>
            <person name="Tolmasky M.E."/>
        </authorList>
    </citation>
    <scope>NUCLEOTIDE SEQUENCE [LARGE SCALE GENOMIC DNA]</scope>
    <source>
        <strain>ATCC 49188 / DSM 6882 / CCUG 24695 / JCM 21032 / LMG 3331 / NBRC 15819 / NCTC 12168 / Alc 37</strain>
    </source>
</reference>